<reference key="1">
    <citation type="journal article" date="1998" name="Nature">
        <title>Analysis of 1.9 Mb of contiguous sequence from chromosome 4 of Arabidopsis thaliana.</title>
        <authorList>
            <person name="Bevan M."/>
            <person name="Bancroft I."/>
            <person name="Bent E."/>
            <person name="Love K."/>
            <person name="Goodman H.M."/>
            <person name="Dean C."/>
            <person name="Bergkamp R."/>
            <person name="Dirkse W."/>
            <person name="van Staveren M."/>
            <person name="Stiekema W."/>
            <person name="Drost L."/>
            <person name="Ridley P."/>
            <person name="Hudson S.-A."/>
            <person name="Patel K."/>
            <person name="Murphy G."/>
            <person name="Piffanelli P."/>
            <person name="Wedler H."/>
            <person name="Wedler E."/>
            <person name="Wambutt R."/>
            <person name="Weitzenegger T."/>
            <person name="Pohl T."/>
            <person name="Terryn N."/>
            <person name="Gielen J."/>
            <person name="Villarroel R."/>
            <person name="De Clercq R."/>
            <person name="van Montagu M."/>
            <person name="Lecharny A."/>
            <person name="Aubourg S."/>
            <person name="Gy I."/>
            <person name="Kreis M."/>
            <person name="Lao N."/>
            <person name="Kavanagh T."/>
            <person name="Hempel S."/>
            <person name="Kotter P."/>
            <person name="Entian K.-D."/>
            <person name="Rieger M."/>
            <person name="Schaefer M."/>
            <person name="Funk B."/>
            <person name="Mueller-Auer S."/>
            <person name="Silvey M."/>
            <person name="James R."/>
            <person name="Monfort A."/>
            <person name="Pons A."/>
            <person name="Puigdomenech P."/>
            <person name="Douka A."/>
            <person name="Voukelatou E."/>
            <person name="Milioni D."/>
            <person name="Hatzopoulos P."/>
            <person name="Piravandi E."/>
            <person name="Obermaier B."/>
            <person name="Hilbert H."/>
            <person name="Duesterhoeft A."/>
            <person name="Moores T."/>
            <person name="Jones J.D.G."/>
            <person name="Eneva T."/>
            <person name="Palme K."/>
            <person name="Benes V."/>
            <person name="Rechmann S."/>
            <person name="Ansorge W."/>
            <person name="Cooke R."/>
            <person name="Berger C."/>
            <person name="Delseny M."/>
            <person name="Voet M."/>
            <person name="Volckaert G."/>
            <person name="Mewes H.-W."/>
            <person name="Klosterman S."/>
            <person name="Schueller C."/>
            <person name="Chalwatzis N."/>
        </authorList>
    </citation>
    <scope>NUCLEOTIDE SEQUENCE [LARGE SCALE GENOMIC DNA]</scope>
    <source>
        <strain>cv. Columbia</strain>
    </source>
</reference>
<reference key="2">
    <citation type="journal article" date="1999" name="Nature">
        <title>Sequence and analysis of chromosome 4 of the plant Arabidopsis thaliana.</title>
        <authorList>
            <person name="Mayer K.F.X."/>
            <person name="Schueller C."/>
            <person name="Wambutt R."/>
            <person name="Murphy G."/>
            <person name="Volckaert G."/>
            <person name="Pohl T."/>
            <person name="Duesterhoeft A."/>
            <person name="Stiekema W."/>
            <person name="Entian K.-D."/>
            <person name="Terryn N."/>
            <person name="Harris B."/>
            <person name="Ansorge W."/>
            <person name="Brandt P."/>
            <person name="Grivell L.A."/>
            <person name="Rieger M."/>
            <person name="Weichselgartner M."/>
            <person name="de Simone V."/>
            <person name="Obermaier B."/>
            <person name="Mache R."/>
            <person name="Mueller M."/>
            <person name="Kreis M."/>
            <person name="Delseny M."/>
            <person name="Puigdomenech P."/>
            <person name="Watson M."/>
            <person name="Schmidtheini T."/>
            <person name="Reichert B."/>
            <person name="Portetelle D."/>
            <person name="Perez-Alonso M."/>
            <person name="Boutry M."/>
            <person name="Bancroft I."/>
            <person name="Vos P."/>
            <person name="Hoheisel J."/>
            <person name="Zimmermann W."/>
            <person name="Wedler H."/>
            <person name="Ridley P."/>
            <person name="Langham S.-A."/>
            <person name="McCullagh B."/>
            <person name="Bilham L."/>
            <person name="Robben J."/>
            <person name="van der Schueren J."/>
            <person name="Grymonprez B."/>
            <person name="Chuang Y.-J."/>
            <person name="Vandenbussche F."/>
            <person name="Braeken M."/>
            <person name="Weltjens I."/>
            <person name="Voet M."/>
            <person name="Bastiaens I."/>
            <person name="Aert R."/>
            <person name="Defoor E."/>
            <person name="Weitzenegger T."/>
            <person name="Bothe G."/>
            <person name="Ramsperger U."/>
            <person name="Hilbert H."/>
            <person name="Braun M."/>
            <person name="Holzer E."/>
            <person name="Brandt A."/>
            <person name="Peters S."/>
            <person name="van Staveren M."/>
            <person name="Dirkse W."/>
            <person name="Mooijman P."/>
            <person name="Klein Lankhorst R."/>
            <person name="Rose M."/>
            <person name="Hauf J."/>
            <person name="Koetter P."/>
            <person name="Berneiser S."/>
            <person name="Hempel S."/>
            <person name="Feldpausch M."/>
            <person name="Lamberth S."/>
            <person name="Van den Daele H."/>
            <person name="De Keyser A."/>
            <person name="Buysshaert C."/>
            <person name="Gielen J."/>
            <person name="Villarroel R."/>
            <person name="De Clercq R."/>
            <person name="van Montagu M."/>
            <person name="Rogers J."/>
            <person name="Cronin A."/>
            <person name="Quail M.A."/>
            <person name="Bray-Allen S."/>
            <person name="Clark L."/>
            <person name="Doggett J."/>
            <person name="Hall S."/>
            <person name="Kay M."/>
            <person name="Lennard N."/>
            <person name="McLay K."/>
            <person name="Mayes R."/>
            <person name="Pettett A."/>
            <person name="Rajandream M.A."/>
            <person name="Lyne M."/>
            <person name="Benes V."/>
            <person name="Rechmann S."/>
            <person name="Borkova D."/>
            <person name="Bloecker H."/>
            <person name="Scharfe M."/>
            <person name="Grimm M."/>
            <person name="Loehnert T.-H."/>
            <person name="Dose S."/>
            <person name="de Haan M."/>
            <person name="Maarse A.C."/>
            <person name="Schaefer M."/>
            <person name="Mueller-Auer S."/>
            <person name="Gabel C."/>
            <person name="Fuchs M."/>
            <person name="Fartmann B."/>
            <person name="Granderath K."/>
            <person name="Dauner D."/>
            <person name="Herzl A."/>
            <person name="Neumann S."/>
            <person name="Argiriou A."/>
            <person name="Vitale D."/>
            <person name="Liguori R."/>
            <person name="Piravandi E."/>
            <person name="Massenet O."/>
            <person name="Quigley F."/>
            <person name="Clabauld G."/>
            <person name="Muendlein A."/>
            <person name="Felber R."/>
            <person name="Schnabl S."/>
            <person name="Hiller R."/>
            <person name="Schmidt W."/>
            <person name="Lecharny A."/>
            <person name="Aubourg S."/>
            <person name="Chefdor F."/>
            <person name="Cooke R."/>
            <person name="Berger C."/>
            <person name="Monfort A."/>
            <person name="Casacuberta E."/>
            <person name="Gibbons T."/>
            <person name="Weber N."/>
            <person name="Vandenbol M."/>
            <person name="Bargues M."/>
            <person name="Terol J."/>
            <person name="Torres A."/>
            <person name="Perez-Perez A."/>
            <person name="Purnelle B."/>
            <person name="Bent E."/>
            <person name="Johnson S."/>
            <person name="Tacon D."/>
            <person name="Jesse T."/>
            <person name="Heijnen L."/>
            <person name="Schwarz S."/>
            <person name="Scholler P."/>
            <person name="Heber S."/>
            <person name="Francs P."/>
            <person name="Bielke C."/>
            <person name="Frishman D."/>
            <person name="Haase D."/>
            <person name="Lemcke K."/>
            <person name="Mewes H.-W."/>
            <person name="Stocker S."/>
            <person name="Zaccaria P."/>
            <person name="Bevan M."/>
            <person name="Wilson R.K."/>
            <person name="de la Bastide M."/>
            <person name="Habermann K."/>
            <person name="Parnell L."/>
            <person name="Dedhia N."/>
            <person name="Gnoj L."/>
            <person name="Schutz K."/>
            <person name="Huang E."/>
            <person name="Spiegel L."/>
            <person name="Sekhon M."/>
            <person name="Murray J."/>
            <person name="Sheet P."/>
            <person name="Cordes M."/>
            <person name="Abu-Threideh J."/>
            <person name="Stoneking T."/>
            <person name="Kalicki J."/>
            <person name="Graves T."/>
            <person name="Harmon G."/>
            <person name="Edwards J."/>
            <person name="Latreille P."/>
            <person name="Courtney L."/>
            <person name="Cloud J."/>
            <person name="Abbott A."/>
            <person name="Scott K."/>
            <person name="Johnson D."/>
            <person name="Minx P."/>
            <person name="Bentley D."/>
            <person name="Fulton B."/>
            <person name="Miller N."/>
            <person name="Greco T."/>
            <person name="Kemp K."/>
            <person name="Kramer J."/>
            <person name="Fulton L."/>
            <person name="Mardis E."/>
            <person name="Dante M."/>
            <person name="Pepin K."/>
            <person name="Hillier L.W."/>
            <person name="Nelson J."/>
            <person name="Spieth J."/>
            <person name="Ryan E."/>
            <person name="Andrews S."/>
            <person name="Geisel C."/>
            <person name="Layman D."/>
            <person name="Du H."/>
            <person name="Ali J."/>
            <person name="Berghoff A."/>
            <person name="Jones K."/>
            <person name="Drone K."/>
            <person name="Cotton M."/>
            <person name="Joshu C."/>
            <person name="Antonoiu B."/>
            <person name="Zidanic M."/>
            <person name="Strong C."/>
            <person name="Sun H."/>
            <person name="Lamar B."/>
            <person name="Yordan C."/>
            <person name="Ma P."/>
            <person name="Zhong J."/>
            <person name="Preston R."/>
            <person name="Vil D."/>
            <person name="Shekher M."/>
            <person name="Matero A."/>
            <person name="Shah R."/>
            <person name="Swaby I.K."/>
            <person name="O'Shaughnessy A."/>
            <person name="Rodriguez M."/>
            <person name="Hoffman J."/>
            <person name="Till S."/>
            <person name="Granat S."/>
            <person name="Shohdy N."/>
            <person name="Hasegawa A."/>
            <person name="Hameed A."/>
            <person name="Lodhi M."/>
            <person name="Johnson A."/>
            <person name="Chen E."/>
            <person name="Marra M.A."/>
            <person name="Martienssen R."/>
            <person name="McCombie W.R."/>
        </authorList>
    </citation>
    <scope>NUCLEOTIDE SEQUENCE [LARGE SCALE GENOMIC DNA]</scope>
    <source>
        <strain>cv. Columbia</strain>
    </source>
</reference>
<reference key="3">
    <citation type="journal article" date="2017" name="Plant J.">
        <title>Araport11: a complete reannotation of the Arabidopsis thaliana reference genome.</title>
        <authorList>
            <person name="Cheng C.Y."/>
            <person name="Krishnakumar V."/>
            <person name="Chan A.P."/>
            <person name="Thibaud-Nissen F."/>
            <person name="Schobel S."/>
            <person name="Town C.D."/>
        </authorList>
    </citation>
    <scope>GENOME REANNOTATION</scope>
    <source>
        <strain>cv. Columbia</strain>
    </source>
</reference>
<reference key="4">
    <citation type="journal article" date="2003" name="Science">
        <title>Empirical analysis of transcriptional activity in the Arabidopsis genome.</title>
        <authorList>
            <person name="Yamada K."/>
            <person name="Lim J."/>
            <person name="Dale J.M."/>
            <person name="Chen H."/>
            <person name="Shinn P."/>
            <person name="Palm C.J."/>
            <person name="Southwick A.M."/>
            <person name="Wu H.C."/>
            <person name="Kim C.J."/>
            <person name="Nguyen M."/>
            <person name="Pham P.K."/>
            <person name="Cheuk R.F."/>
            <person name="Karlin-Newmann G."/>
            <person name="Liu S.X."/>
            <person name="Lam B."/>
            <person name="Sakano H."/>
            <person name="Wu T."/>
            <person name="Yu G."/>
            <person name="Miranda M."/>
            <person name="Quach H.L."/>
            <person name="Tripp M."/>
            <person name="Chang C.H."/>
            <person name="Lee J.M."/>
            <person name="Toriumi M.J."/>
            <person name="Chan M.M."/>
            <person name="Tang C.C."/>
            <person name="Onodera C.S."/>
            <person name="Deng J.M."/>
            <person name="Akiyama K."/>
            <person name="Ansari Y."/>
            <person name="Arakawa T."/>
            <person name="Banh J."/>
            <person name="Banno F."/>
            <person name="Bowser L."/>
            <person name="Brooks S.Y."/>
            <person name="Carninci P."/>
            <person name="Chao Q."/>
            <person name="Choy N."/>
            <person name="Enju A."/>
            <person name="Goldsmith A.D."/>
            <person name="Gurjal M."/>
            <person name="Hansen N.F."/>
            <person name="Hayashizaki Y."/>
            <person name="Johnson-Hopson C."/>
            <person name="Hsuan V.W."/>
            <person name="Iida K."/>
            <person name="Karnes M."/>
            <person name="Khan S."/>
            <person name="Koesema E."/>
            <person name="Ishida J."/>
            <person name="Jiang P.X."/>
            <person name="Jones T."/>
            <person name="Kawai J."/>
            <person name="Kamiya A."/>
            <person name="Meyers C."/>
            <person name="Nakajima M."/>
            <person name="Narusaka M."/>
            <person name="Seki M."/>
            <person name="Sakurai T."/>
            <person name="Satou M."/>
            <person name="Tamse R."/>
            <person name="Vaysberg M."/>
            <person name="Wallender E.K."/>
            <person name="Wong C."/>
            <person name="Yamamura Y."/>
            <person name="Yuan S."/>
            <person name="Shinozaki K."/>
            <person name="Davis R.W."/>
            <person name="Theologis A."/>
            <person name="Ecker J.R."/>
        </authorList>
    </citation>
    <scope>NUCLEOTIDE SEQUENCE [LARGE SCALE MRNA]</scope>
    <source>
        <strain>cv. Columbia</strain>
    </source>
</reference>
<accession>P58728</accession>
<sequence>MQASDRFNINSQLEHLQAKYVGTGHADLSRFEWAVNIQRDSYASYIGHYPMLSYFAIAENESIGRERYNFMQKMLLPCGLPPEREEE</sequence>
<organism>
    <name type="scientific">Arabidopsis thaliana</name>
    <name type="common">Mouse-ear cress</name>
    <dbReference type="NCBI Taxonomy" id="3702"/>
    <lineage>
        <taxon>Eukaryota</taxon>
        <taxon>Viridiplantae</taxon>
        <taxon>Streptophyta</taxon>
        <taxon>Embryophyta</taxon>
        <taxon>Tracheophyta</taxon>
        <taxon>Spermatophyta</taxon>
        <taxon>Magnoliopsida</taxon>
        <taxon>eudicotyledons</taxon>
        <taxon>Gunneridae</taxon>
        <taxon>Pentapetalae</taxon>
        <taxon>rosids</taxon>
        <taxon>malvids</taxon>
        <taxon>Brassicales</taxon>
        <taxon>Brassicaceae</taxon>
        <taxon>Camelineae</taxon>
        <taxon>Arabidopsis</taxon>
    </lineage>
</organism>
<comment type="similarity">
    <text evidence="1">Belongs to the SF3B5 family.</text>
</comment>
<keyword id="KW-1185">Reference proteome</keyword>
<name>SF3BB_ARATH</name>
<proteinExistence type="inferred from homology"/>
<dbReference type="EMBL" id="Z97336">
    <property type="status" value="NOT_ANNOTATED_CDS"/>
    <property type="molecule type" value="Genomic_DNA"/>
</dbReference>
<dbReference type="EMBL" id="AL161538">
    <property type="status" value="NOT_ANNOTATED_CDS"/>
    <property type="molecule type" value="Genomic_DNA"/>
</dbReference>
<dbReference type="EMBL" id="CP002687">
    <property type="protein sequence ID" value="AEE83422.1"/>
    <property type="molecule type" value="Genomic_DNA"/>
</dbReference>
<dbReference type="EMBL" id="AY064021">
    <property type="protein sequence ID" value="AAL36377.1"/>
    <property type="molecule type" value="mRNA"/>
</dbReference>
<dbReference type="EMBL" id="AY123001">
    <property type="protein sequence ID" value="AAM67534.1"/>
    <property type="molecule type" value="mRNA"/>
</dbReference>
<dbReference type="RefSeq" id="NP_849379.1">
    <property type="nucleotide sequence ID" value="NM_179048.3"/>
</dbReference>
<dbReference type="SMR" id="P58728"/>
<dbReference type="BioGRID" id="12374">
    <property type="interactions" value="22"/>
</dbReference>
<dbReference type="FunCoup" id="P58728">
    <property type="interactions" value="3061"/>
</dbReference>
<dbReference type="STRING" id="3702.P58728"/>
<dbReference type="PaxDb" id="3702-AT4G14342.1"/>
<dbReference type="ProteomicsDB" id="232580"/>
<dbReference type="DNASU" id="827077"/>
<dbReference type="EnsemblPlants" id="AT4G14342.1">
    <property type="protein sequence ID" value="AT4G14342.1"/>
    <property type="gene ID" value="AT4G14342"/>
</dbReference>
<dbReference type="GeneID" id="827077"/>
<dbReference type="Gramene" id="AT4G14342.1">
    <property type="protein sequence ID" value="AT4G14342.1"/>
    <property type="gene ID" value="AT4G14342"/>
</dbReference>
<dbReference type="KEGG" id="ath:AT4G14342"/>
<dbReference type="Araport" id="AT4G14342"/>
<dbReference type="TAIR" id="AT4G14342"/>
<dbReference type="eggNOG" id="KOG3485">
    <property type="taxonomic scope" value="Eukaryota"/>
</dbReference>
<dbReference type="HOGENOM" id="CLU_138804_3_1_1"/>
<dbReference type="InParanoid" id="P58728"/>
<dbReference type="OMA" id="YDRFNIH"/>
<dbReference type="OrthoDB" id="274726at2759"/>
<dbReference type="PhylomeDB" id="P58728"/>
<dbReference type="PRO" id="PR:P58728"/>
<dbReference type="Proteomes" id="UP000006548">
    <property type="component" value="Chromosome 4"/>
</dbReference>
<dbReference type="ExpressionAtlas" id="P58728">
    <property type="expression patterns" value="baseline and differential"/>
</dbReference>
<dbReference type="GO" id="GO:0000398">
    <property type="term" value="P:mRNA splicing, via spliceosome"/>
    <property type="evidence" value="ECO:0007669"/>
    <property type="project" value="InterPro"/>
</dbReference>
<dbReference type="InterPro" id="IPR009846">
    <property type="entry name" value="SF3b5/RDS3-10"/>
</dbReference>
<dbReference type="InterPro" id="IPR017089">
    <property type="entry name" value="Splicing_factor_3B_subunit_5"/>
</dbReference>
<dbReference type="PANTHER" id="PTHR20978">
    <property type="entry name" value="SPLICING FACTOR 3B SUBUNIT 5"/>
    <property type="match status" value="1"/>
</dbReference>
<dbReference type="PANTHER" id="PTHR20978:SF8">
    <property type="entry name" value="SPLICING FACTOR SUBUNIT"/>
    <property type="match status" value="1"/>
</dbReference>
<dbReference type="Pfam" id="PF07189">
    <property type="entry name" value="SF3b10"/>
    <property type="match status" value="1"/>
</dbReference>
<dbReference type="PIRSF" id="PIRSF037010">
    <property type="entry name" value="Splicing_factor_3B_subunit_5"/>
    <property type="match status" value="1"/>
</dbReference>
<protein>
    <recommendedName>
        <fullName>Uncharacterized protein At4g14342</fullName>
    </recommendedName>
</protein>
<gene>
    <name type="ordered locus">At4g14342</name>
    <name type="ORF">FCAALL.352</name>
</gene>
<evidence type="ECO:0000305" key="1"/>
<feature type="chain" id="PRO_0000220761" description="Uncharacterized protein At4g14342">
    <location>
        <begin position="1"/>
        <end position="87"/>
    </location>
</feature>